<protein>
    <recommendedName>
        <fullName evidence="1">Probable protein kinase UbiB</fullName>
        <ecNumber evidence="1">2.7.-.-</ecNumber>
    </recommendedName>
    <alternativeName>
        <fullName evidence="1">Ubiquinone biosynthesis protein UbiB</fullName>
    </alternativeName>
</protein>
<organism>
    <name type="scientific">Pseudomonas putida (strain GB-1)</name>
    <dbReference type="NCBI Taxonomy" id="76869"/>
    <lineage>
        <taxon>Bacteria</taxon>
        <taxon>Pseudomonadati</taxon>
        <taxon>Pseudomonadota</taxon>
        <taxon>Gammaproteobacteria</taxon>
        <taxon>Pseudomonadales</taxon>
        <taxon>Pseudomonadaceae</taxon>
        <taxon>Pseudomonas</taxon>
    </lineage>
</organism>
<feature type="chain" id="PRO_1000080502" description="Probable protein kinase UbiB">
    <location>
        <begin position="1"/>
        <end position="540"/>
    </location>
</feature>
<feature type="transmembrane region" description="Helical" evidence="1">
    <location>
        <begin position="24"/>
        <end position="44"/>
    </location>
</feature>
<feature type="transmembrane region" description="Helical" evidence="1">
    <location>
        <begin position="496"/>
        <end position="516"/>
    </location>
</feature>
<feature type="transmembrane region" description="Helical" evidence="1">
    <location>
        <begin position="518"/>
        <end position="538"/>
    </location>
</feature>
<feature type="domain" description="Protein kinase" evidence="1">
    <location>
        <begin position="126"/>
        <end position="494"/>
    </location>
</feature>
<feature type="active site" description="Proton acceptor" evidence="1">
    <location>
        <position position="289"/>
    </location>
</feature>
<feature type="binding site" evidence="1">
    <location>
        <begin position="132"/>
        <end position="140"/>
    </location>
    <ligand>
        <name>ATP</name>
        <dbReference type="ChEBI" id="CHEBI:30616"/>
    </ligand>
</feature>
<feature type="binding site" evidence="1">
    <location>
        <position position="154"/>
    </location>
    <ligand>
        <name>ATP</name>
        <dbReference type="ChEBI" id="CHEBI:30616"/>
    </ligand>
</feature>
<sequence length="540" mass="61570">MKLLAVRRLFRIQRVVIRYRLDDLLFEQPLLPWWLASLRLLMPWRWLPRKPTELSRGARLRLALQDLGPIFIKFGQLLSTRRDLLPTDIADELMLLQDRVPPFDPQKAVALIEEQLGAKVGEVFSRFDVEPLASASVAQVHAARLKTGEEVVVKVVRPGLKPVIAQDLAWLFLIAKAAERASADARRLHPVEIVGDYEKTIYDELDLLREAANASQLRRNFEGSELMYVPQVYWDLCRPKVLVMERIYGVPVTDMVTLADQRTDMKLLAERGVEVFFTQVFRDSFFHADMHPGNIFVSTVKPWSPQYIAIDCGIVGSLTAEDQDYLARNLIAFFKRDYRRVAQLHIDSGWVPAHTKVNEFEAAIRTVCEPIFEKPLKDISFGQVLMRLFQTARRFNMEVQPQLVLLQKTLLNIEGLGRQLYPDLDLWSTAKPFLERWMRDRYSPKAVFGNIHGQVEQLPHLANMARDLLERLSQPHLNDPQLPERRRQGDRWALRLLGAGLLGGGAVLAAGAAEAASLAAPAAWPAWLMLAAGLYLIVRQ</sequence>
<reference key="1">
    <citation type="submission" date="2008-01" db="EMBL/GenBank/DDBJ databases">
        <title>Complete sequence of Pseudomonas putida GB-1.</title>
        <authorList>
            <consortium name="US DOE Joint Genome Institute"/>
            <person name="Copeland A."/>
            <person name="Lucas S."/>
            <person name="Lapidus A."/>
            <person name="Barry K."/>
            <person name="Glavina del Rio T."/>
            <person name="Dalin E."/>
            <person name="Tice H."/>
            <person name="Pitluck S."/>
            <person name="Bruce D."/>
            <person name="Goodwin L."/>
            <person name="Chertkov O."/>
            <person name="Brettin T."/>
            <person name="Detter J.C."/>
            <person name="Han C."/>
            <person name="Kuske C.R."/>
            <person name="Schmutz J."/>
            <person name="Larimer F."/>
            <person name="Land M."/>
            <person name="Hauser L."/>
            <person name="Kyrpides N."/>
            <person name="Kim E."/>
            <person name="McCarthy J.K."/>
            <person name="Richardson P."/>
        </authorList>
    </citation>
    <scope>NUCLEOTIDE SEQUENCE [LARGE SCALE GENOMIC DNA]</scope>
    <source>
        <strain>GB-1</strain>
    </source>
</reference>
<dbReference type="EC" id="2.7.-.-" evidence="1"/>
<dbReference type="EMBL" id="CP000926">
    <property type="protein sequence ID" value="ABZ00948.1"/>
    <property type="molecule type" value="Genomic_DNA"/>
</dbReference>
<dbReference type="RefSeq" id="WP_012274570.1">
    <property type="nucleotide sequence ID" value="NC_010322.1"/>
</dbReference>
<dbReference type="SMR" id="B0KM38"/>
<dbReference type="KEGG" id="ppg:PputGB1_5063"/>
<dbReference type="eggNOG" id="COG0661">
    <property type="taxonomic scope" value="Bacteria"/>
</dbReference>
<dbReference type="HOGENOM" id="CLU_006533_0_0_6"/>
<dbReference type="UniPathway" id="UPA00232"/>
<dbReference type="Proteomes" id="UP000002157">
    <property type="component" value="Chromosome"/>
</dbReference>
<dbReference type="GO" id="GO:0005886">
    <property type="term" value="C:plasma membrane"/>
    <property type="evidence" value="ECO:0007669"/>
    <property type="project" value="UniProtKB-SubCell"/>
</dbReference>
<dbReference type="GO" id="GO:0005524">
    <property type="term" value="F:ATP binding"/>
    <property type="evidence" value="ECO:0007669"/>
    <property type="project" value="UniProtKB-KW"/>
</dbReference>
<dbReference type="GO" id="GO:0004672">
    <property type="term" value="F:protein kinase activity"/>
    <property type="evidence" value="ECO:0007669"/>
    <property type="project" value="UniProtKB-UniRule"/>
</dbReference>
<dbReference type="GO" id="GO:0010795">
    <property type="term" value="P:regulation of ubiquinone biosynthetic process"/>
    <property type="evidence" value="ECO:0007669"/>
    <property type="project" value="UniProtKB-UniRule"/>
</dbReference>
<dbReference type="GO" id="GO:0006744">
    <property type="term" value="P:ubiquinone biosynthetic process"/>
    <property type="evidence" value="ECO:0007669"/>
    <property type="project" value="UniProtKB-UniPathway"/>
</dbReference>
<dbReference type="CDD" id="cd13972">
    <property type="entry name" value="UbiB"/>
    <property type="match status" value="1"/>
</dbReference>
<dbReference type="HAMAP" id="MF_00414">
    <property type="entry name" value="UbiB"/>
    <property type="match status" value="1"/>
</dbReference>
<dbReference type="InterPro" id="IPR004147">
    <property type="entry name" value="ABC1_dom"/>
</dbReference>
<dbReference type="InterPro" id="IPR011009">
    <property type="entry name" value="Kinase-like_dom_sf"/>
</dbReference>
<dbReference type="InterPro" id="IPR010232">
    <property type="entry name" value="UbiB"/>
</dbReference>
<dbReference type="InterPro" id="IPR045308">
    <property type="entry name" value="UbiB_bact"/>
</dbReference>
<dbReference type="InterPro" id="IPR050154">
    <property type="entry name" value="UbiB_kinase"/>
</dbReference>
<dbReference type="NCBIfam" id="NF003404">
    <property type="entry name" value="PRK04750.1"/>
    <property type="match status" value="1"/>
</dbReference>
<dbReference type="NCBIfam" id="TIGR01982">
    <property type="entry name" value="UbiB"/>
    <property type="match status" value="1"/>
</dbReference>
<dbReference type="PANTHER" id="PTHR10566">
    <property type="entry name" value="CHAPERONE-ACTIVITY OF BC1 COMPLEX CABC1 -RELATED"/>
    <property type="match status" value="1"/>
</dbReference>
<dbReference type="PANTHER" id="PTHR10566:SF113">
    <property type="entry name" value="PROTEIN ACTIVITY OF BC1 COMPLEX KINASE 7, CHLOROPLASTIC"/>
    <property type="match status" value="1"/>
</dbReference>
<dbReference type="Pfam" id="PF03109">
    <property type="entry name" value="ABC1"/>
    <property type="match status" value="1"/>
</dbReference>
<dbReference type="SUPFAM" id="SSF56112">
    <property type="entry name" value="Protein kinase-like (PK-like)"/>
    <property type="match status" value="1"/>
</dbReference>
<accession>B0KM38</accession>
<comment type="function">
    <text evidence="1">Is probably a protein kinase regulator of UbiI activity which is involved in aerobic coenzyme Q (ubiquinone) biosynthesis.</text>
</comment>
<comment type="pathway">
    <text>Cofactor biosynthesis; ubiquinone biosynthesis [regulation].</text>
</comment>
<comment type="subcellular location">
    <subcellularLocation>
        <location evidence="1">Cell inner membrane</location>
        <topology evidence="1">Multi-pass membrane protein</topology>
    </subcellularLocation>
</comment>
<comment type="similarity">
    <text evidence="1">Belongs to the ABC1 family. UbiB subfamily.</text>
</comment>
<name>UBIB_PSEPG</name>
<proteinExistence type="inferred from homology"/>
<keyword id="KW-0067">ATP-binding</keyword>
<keyword id="KW-0997">Cell inner membrane</keyword>
<keyword id="KW-1003">Cell membrane</keyword>
<keyword id="KW-0418">Kinase</keyword>
<keyword id="KW-0472">Membrane</keyword>
<keyword id="KW-0547">Nucleotide-binding</keyword>
<keyword id="KW-0808">Transferase</keyword>
<keyword id="KW-0812">Transmembrane</keyword>
<keyword id="KW-1133">Transmembrane helix</keyword>
<keyword id="KW-0831">Ubiquinone biosynthesis</keyword>
<evidence type="ECO:0000255" key="1">
    <source>
        <dbReference type="HAMAP-Rule" id="MF_00414"/>
    </source>
</evidence>
<gene>
    <name evidence="1" type="primary">ubiB</name>
    <name type="ordered locus">PputGB1_5063</name>
</gene>